<keyword id="KW-0012">Acyltransferase</keyword>
<keyword id="KW-0963">Cytoplasm</keyword>
<keyword id="KW-0275">Fatty acid biosynthesis</keyword>
<keyword id="KW-0276">Fatty acid metabolism</keyword>
<keyword id="KW-0444">Lipid biosynthesis</keyword>
<keyword id="KW-0443">Lipid metabolism</keyword>
<keyword id="KW-0511">Multifunctional enzyme</keyword>
<keyword id="KW-1185">Reference proteome</keyword>
<keyword id="KW-0808">Transferase</keyword>
<reference key="1">
    <citation type="submission" date="2006-12" db="EMBL/GenBank/DDBJ databases">
        <title>Complete sequence of Chlorobium phaeobacteroides DSM 266.</title>
        <authorList>
            <consortium name="US DOE Joint Genome Institute"/>
            <person name="Copeland A."/>
            <person name="Lucas S."/>
            <person name="Lapidus A."/>
            <person name="Barry K."/>
            <person name="Detter J.C."/>
            <person name="Glavina del Rio T."/>
            <person name="Hammon N."/>
            <person name="Israni S."/>
            <person name="Pitluck S."/>
            <person name="Goltsman E."/>
            <person name="Schmutz J."/>
            <person name="Larimer F."/>
            <person name="Land M."/>
            <person name="Hauser L."/>
            <person name="Mikhailova N."/>
            <person name="Li T."/>
            <person name="Overmann J."/>
            <person name="Bryant D.A."/>
            <person name="Richardson P."/>
        </authorList>
    </citation>
    <scope>NUCLEOTIDE SEQUENCE [LARGE SCALE GENOMIC DNA]</scope>
    <source>
        <strain>DSM 266 / SMG 266 / 2430</strain>
    </source>
</reference>
<protein>
    <recommendedName>
        <fullName evidence="1">Beta-ketoacyl-[acyl-carrier-protein] synthase III</fullName>
        <shortName evidence="1">Beta-ketoacyl-ACP synthase III</shortName>
        <shortName evidence="1">KAS III</shortName>
        <ecNumber evidence="1">2.3.1.180</ecNumber>
    </recommendedName>
    <alternativeName>
        <fullName evidence="1">3-oxoacyl-[acyl-carrier-protein] synthase 3</fullName>
    </alternativeName>
    <alternativeName>
        <fullName evidence="1">3-oxoacyl-[acyl-carrier-protein] synthase III</fullName>
    </alternativeName>
</protein>
<proteinExistence type="inferred from homology"/>
<sequence>MKAAITATAKYLPQSVLSNHDLEQMLETNDEWIRSRTGIGERRIMNDPSKATAYMCGEVALQLLEARKMKPEEIEVIIVATMTPDMLFPATACFVQGIIGATNAWAFDINAACSGFLFALSTASRLIESGAHKKVMVIGGDKMSSVIDYTNRSTAILFGDGAAGVILEPSTNDNYGILDARLYSDGASGTSHLLMAAGGSLNPATHETVDKRMHFLHQDGKQVFKSAVTSMADVAAEIMTRNNLSAEDISFLVPHQANQRIINATAERMGLDQEKVYSNVARYGNTTAGTIPICLAELNEQEQLKTGSNLVLVSFGAGYTWGGIYIKWQ</sequence>
<name>FABH_CHLPD</name>
<accession>A1BJA1</accession>
<feature type="chain" id="PRO_1000056340" description="Beta-ketoacyl-[acyl-carrier-protein] synthase III">
    <location>
        <begin position="1"/>
        <end position="329"/>
    </location>
</feature>
<feature type="region of interest" description="ACP-binding" evidence="1">
    <location>
        <begin position="256"/>
        <end position="260"/>
    </location>
</feature>
<feature type="active site" evidence="1">
    <location>
        <position position="113"/>
    </location>
</feature>
<feature type="active site" evidence="1">
    <location>
        <position position="255"/>
    </location>
</feature>
<feature type="active site" evidence="1">
    <location>
        <position position="285"/>
    </location>
</feature>
<dbReference type="EC" id="2.3.1.180" evidence="1"/>
<dbReference type="EMBL" id="CP000492">
    <property type="protein sequence ID" value="ABL66478.1"/>
    <property type="molecule type" value="Genomic_DNA"/>
</dbReference>
<dbReference type="RefSeq" id="WP_011746255.1">
    <property type="nucleotide sequence ID" value="NC_008639.1"/>
</dbReference>
<dbReference type="SMR" id="A1BJA1"/>
<dbReference type="STRING" id="290317.Cpha266_2490"/>
<dbReference type="KEGG" id="cph:Cpha266_2490"/>
<dbReference type="eggNOG" id="COG0332">
    <property type="taxonomic scope" value="Bacteria"/>
</dbReference>
<dbReference type="HOGENOM" id="CLU_039592_3_1_10"/>
<dbReference type="OrthoDB" id="9815506at2"/>
<dbReference type="UniPathway" id="UPA00094"/>
<dbReference type="Proteomes" id="UP000008701">
    <property type="component" value="Chromosome"/>
</dbReference>
<dbReference type="GO" id="GO:0005737">
    <property type="term" value="C:cytoplasm"/>
    <property type="evidence" value="ECO:0007669"/>
    <property type="project" value="UniProtKB-SubCell"/>
</dbReference>
<dbReference type="GO" id="GO:0004315">
    <property type="term" value="F:3-oxoacyl-[acyl-carrier-protein] synthase activity"/>
    <property type="evidence" value="ECO:0007669"/>
    <property type="project" value="InterPro"/>
</dbReference>
<dbReference type="GO" id="GO:0033818">
    <property type="term" value="F:beta-ketoacyl-acyl-carrier-protein synthase III activity"/>
    <property type="evidence" value="ECO:0007669"/>
    <property type="project" value="UniProtKB-UniRule"/>
</dbReference>
<dbReference type="GO" id="GO:0006633">
    <property type="term" value="P:fatty acid biosynthetic process"/>
    <property type="evidence" value="ECO:0007669"/>
    <property type="project" value="UniProtKB-UniRule"/>
</dbReference>
<dbReference type="GO" id="GO:0044550">
    <property type="term" value="P:secondary metabolite biosynthetic process"/>
    <property type="evidence" value="ECO:0007669"/>
    <property type="project" value="TreeGrafter"/>
</dbReference>
<dbReference type="CDD" id="cd00830">
    <property type="entry name" value="KAS_III"/>
    <property type="match status" value="1"/>
</dbReference>
<dbReference type="FunFam" id="3.40.47.10:FF:000004">
    <property type="entry name" value="3-oxoacyl-[acyl-carrier-protein] synthase 3"/>
    <property type="match status" value="1"/>
</dbReference>
<dbReference type="Gene3D" id="3.40.47.10">
    <property type="match status" value="1"/>
</dbReference>
<dbReference type="HAMAP" id="MF_01815">
    <property type="entry name" value="FabH"/>
    <property type="match status" value="1"/>
</dbReference>
<dbReference type="InterPro" id="IPR013747">
    <property type="entry name" value="ACP_syn_III_C"/>
</dbReference>
<dbReference type="InterPro" id="IPR013751">
    <property type="entry name" value="ACP_syn_III_N"/>
</dbReference>
<dbReference type="InterPro" id="IPR004655">
    <property type="entry name" value="FabH"/>
</dbReference>
<dbReference type="InterPro" id="IPR016039">
    <property type="entry name" value="Thiolase-like"/>
</dbReference>
<dbReference type="NCBIfam" id="TIGR00747">
    <property type="entry name" value="fabH"/>
    <property type="match status" value="1"/>
</dbReference>
<dbReference type="NCBIfam" id="NF006829">
    <property type="entry name" value="PRK09352.1"/>
    <property type="match status" value="1"/>
</dbReference>
<dbReference type="PANTHER" id="PTHR34069">
    <property type="entry name" value="3-OXOACYL-[ACYL-CARRIER-PROTEIN] SYNTHASE 3"/>
    <property type="match status" value="1"/>
</dbReference>
<dbReference type="PANTHER" id="PTHR34069:SF2">
    <property type="entry name" value="BETA-KETOACYL-[ACYL-CARRIER-PROTEIN] SYNTHASE III"/>
    <property type="match status" value="1"/>
</dbReference>
<dbReference type="Pfam" id="PF08545">
    <property type="entry name" value="ACP_syn_III"/>
    <property type="match status" value="1"/>
</dbReference>
<dbReference type="Pfam" id="PF08541">
    <property type="entry name" value="ACP_syn_III_C"/>
    <property type="match status" value="1"/>
</dbReference>
<dbReference type="SUPFAM" id="SSF53901">
    <property type="entry name" value="Thiolase-like"/>
    <property type="match status" value="1"/>
</dbReference>
<gene>
    <name evidence="1" type="primary">fabH</name>
    <name type="ordered locus">Cpha266_2490</name>
</gene>
<evidence type="ECO:0000255" key="1">
    <source>
        <dbReference type="HAMAP-Rule" id="MF_01815"/>
    </source>
</evidence>
<comment type="function">
    <text evidence="1">Catalyzes the condensation reaction of fatty acid synthesis by the addition to an acyl acceptor of two carbons from malonyl-ACP. Catalyzes the first condensation reaction which initiates fatty acid synthesis and may therefore play a role in governing the total rate of fatty acid production. Possesses both acetoacetyl-ACP synthase and acetyl transacylase activities. Its substrate specificity determines the biosynthesis of branched-chain and/or straight-chain of fatty acids.</text>
</comment>
<comment type="catalytic activity">
    <reaction evidence="1">
        <text>malonyl-[ACP] + acetyl-CoA + H(+) = 3-oxobutanoyl-[ACP] + CO2 + CoA</text>
        <dbReference type="Rhea" id="RHEA:12080"/>
        <dbReference type="Rhea" id="RHEA-COMP:9623"/>
        <dbReference type="Rhea" id="RHEA-COMP:9625"/>
        <dbReference type="ChEBI" id="CHEBI:15378"/>
        <dbReference type="ChEBI" id="CHEBI:16526"/>
        <dbReference type="ChEBI" id="CHEBI:57287"/>
        <dbReference type="ChEBI" id="CHEBI:57288"/>
        <dbReference type="ChEBI" id="CHEBI:78449"/>
        <dbReference type="ChEBI" id="CHEBI:78450"/>
        <dbReference type="EC" id="2.3.1.180"/>
    </reaction>
</comment>
<comment type="pathway">
    <text evidence="1">Lipid metabolism; fatty acid biosynthesis.</text>
</comment>
<comment type="subunit">
    <text evidence="1">Homodimer.</text>
</comment>
<comment type="subcellular location">
    <subcellularLocation>
        <location evidence="1">Cytoplasm</location>
    </subcellularLocation>
</comment>
<comment type="domain">
    <text evidence="1">The last Arg residue of the ACP-binding site is essential for the weak association between ACP/AcpP and FabH.</text>
</comment>
<comment type="similarity">
    <text evidence="1">Belongs to the thiolase-like superfamily. FabH family.</text>
</comment>
<organism>
    <name type="scientific">Chlorobium phaeobacteroides (strain DSM 266 / SMG 266 / 2430)</name>
    <dbReference type="NCBI Taxonomy" id="290317"/>
    <lineage>
        <taxon>Bacteria</taxon>
        <taxon>Pseudomonadati</taxon>
        <taxon>Chlorobiota</taxon>
        <taxon>Chlorobiia</taxon>
        <taxon>Chlorobiales</taxon>
        <taxon>Chlorobiaceae</taxon>
        <taxon>Chlorobium/Pelodictyon group</taxon>
        <taxon>Chlorobium</taxon>
    </lineage>
</organism>